<dbReference type="EC" id="6.1.1.15" evidence="1"/>
<dbReference type="EMBL" id="BX897699">
    <property type="protein sequence ID" value="CAF27677.1"/>
    <property type="molecule type" value="Genomic_DNA"/>
</dbReference>
<dbReference type="RefSeq" id="WP_011180772.1">
    <property type="nucleotide sequence ID" value="NZ_LRIJ02000001.1"/>
</dbReference>
<dbReference type="SMR" id="Q6G3A4"/>
<dbReference type="PaxDb" id="283166-BH08790"/>
<dbReference type="EnsemblBacteria" id="CAF27677">
    <property type="protein sequence ID" value="CAF27677"/>
    <property type="gene ID" value="BH08790"/>
</dbReference>
<dbReference type="GeneID" id="92985459"/>
<dbReference type="KEGG" id="bhe:BH08790"/>
<dbReference type="eggNOG" id="COG0442">
    <property type="taxonomic scope" value="Bacteria"/>
</dbReference>
<dbReference type="OrthoDB" id="9809052at2"/>
<dbReference type="Proteomes" id="UP000000421">
    <property type="component" value="Chromosome"/>
</dbReference>
<dbReference type="GO" id="GO:0005829">
    <property type="term" value="C:cytosol"/>
    <property type="evidence" value="ECO:0007669"/>
    <property type="project" value="TreeGrafter"/>
</dbReference>
<dbReference type="GO" id="GO:0005524">
    <property type="term" value="F:ATP binding"/>
    <property type="evidence" value="ECO:0007669"/>
    <property type="project" value="UniProtKB-UniRule"/>
</dbReference>
<dbReference type="GO" id="GO:0004827">
    <property type="term" value="F:proline-tRNA ligase activity"/>
    <property type="evidence" value="ECO:0007669"/>
    <property type="project" value="UniProtKB-UniRule"/>
</dbReference>
<dbReference type="GO" id="GO:0006433">
    <property type="term" value="P:prolyl-tRNA aminoacylation"/>
    <property type="evidence" value="ECO:0007669"/>
    <property type="project" value="UniProtKB-UniRule"/>
</dbReference>
<dbReference type="CDD" id="cd00861">
    <property type="entry name" value="ProRS_anticodon_short"/>
    <property type="match status" value="1"/>
</dbReference>
<dbReference type="CDD" id="cd00779">
    <property type="entry name" value="ProRS_core_prok"/>
    <property type="match status" value="1"/>
</dbReference>
<dbReference type="FunFam" id="3.30.930.10:FF:000042">
    <property type="entry name" value="probable proline--tRNA ligase, mitochondrial"/>
    <property type="match status" value="1"/>
</dbReference>
<dbReference type="FunFam" id="3.40.50.800:FF:000032">
    <property type="entry name" value="Proline--tRNA ligase"/>
    <property type="match status" value="1"/>
</dbReference>
<dbReference type="Gene3D" id="3.40.50.800">
    <property type="entry name" value="Anticodon-binding domain"/>
    <property type="match status" value="1"/>
</dbReference>
<dbReference type="Gene3D" id="3.30.930.10">
    <property type="entry name" value="Bira Bifunctional Protein, Domain 2"/>
    <property type="match status" value="1"/>
</dbReference>
<dbReference type="HAMAP" id="MF_01570">
    <property type="entry name" value="Pro_tRNA_synth_type2"/>
    <property type="match status" value="1"/>
</dbReference>
<dbReference type="InterPro" id="IPR002314">
    <property type="entry name" value="aa-tRNA-synt_IIb"/>
</dbReference>
<dbReference type="InterPro" id="IPR006195">
    <property type="entry name" value="aa-tRNA-synth_II"/>
</dbReference>
<dbReference type="InterPro" id="IPR045864">
    <property type="entry name" value="aa-tRNA-synth_II/BPL/LPL"/>
</dbReference>
<dbReference type="InterPro" id="IPR004154">
    <property type="entry name" value="Anticodon-bd"/>
</dbReference>
<dbReference type="InterPro" id="IPR036621">
    <property type="entry name" value="Anticodon-bd_dom_sf"/>
</dbReference>
<dbReference type="InterPro" id="IPR002316">
    <property type="entry name" value="Pro-tRNA-ligase_IIa"/>
</dbReference>
<dbReference type="InterPro" id="IPR004500">
    <property type="entry name" value="Pro-tRNA-synth_IIa_bac-type"/>
</dbReference>
<dbReference type="InterPro" id="IPR050062">
    <property type="entry name" value="Pro-tRNA_synthetase"/>
</dbReference>
<dbReference type="InterPro" id="IPR023716">
    <property type="entry name" value="Prolyl-tRNA_ligase_IIa_type2"/>
</dbReference>
<dbReference type="InterPro" id="IPR044140">
    <property type="entry name" value="ProRS_anticodon_short"/>
</dbReference>
<dbReference type="InterPro" id="IPR033730">
    <property type="entry name" value="ProRS_core_prok"/>
</dbReference>
<dbReference type="NCBIfam" id="NF008979">
    <property type="entry name" value="PRK12325.1"/>
    <property type="match status" value="1"/>
</dbReference>
<dbReference type="NCBIfam" id="TIGR00409">
    <property type="entry name" value="proS_fam_II"/>
    <property type="match status" value="1"/>
</dbReference>
<dbReference type="PANTHER" id="PTHR42753">
    <property type="entry name" value="MITOCHONDRIAL RIBOSOME PROTEIN L39/PROLYL-TRNA LIGASE FAMILY MEMBER"/>
    <property type="match status" value="1"/>
</dbReference>
<dbReference type="PANTHER" id="PTHR42753:SF2">
    <property type="entry name" value="PROLINE--TRNA LIGASE"/>
    <property type="match status" value="1"/>
</dbReference>
<dbReference type="Pfam" id="PF03129">
    <property type="entry name" value="HGTP_anticodon"/>
    <property type="match status" value="1"/>
</dbReference>
<dbReference type="Pfam" id="PF00587">
    <property type="entry name" value="tRNA-synt_2b"/>
    <property type="match status" value="1"/>
</dbReference>
<dbReference type="PRINTS" id="PR01046">
    <property type="entry name" value="TRNASYNTHPRO"/>
</dbReference>
<dbReference type="SUPFAM" id="SSF52954">
    <property type="entry name" value="Class II aaRS ABD-related"/>
    <property type="match status" value="1"/>
</dbReference>
<dbReference type="SUPFAM" id="SSF55681">
    <property type="entry name" value="Class II aaRS and biotin synthetases"/>
    <property type="match status" value="1"/>
</dbReference>
<dbReference type="PROSITE" id="PS50862">
    <property type="entry name" value="AA_TRNA_LIGASE_II"/>
    <property type="match status" value="1"/>
</dbReference>
<keyword id="KW-0030">Aminoacyl-tRNA synthetase</keyword>
<keyword id="KW-0067">ATP-binding</keyword>
<keyword id="KW-0963">Cytoplasm</keyword>
<keyword id="KW-0436">Ligase</keyword>
<keyword id="KW-0547">Nucleotide-binding</keyword>
<keyword id="KW-0648">Protein biosynthesis</keyword>
<comment type="function">
    <text evidence="1">Catalyzes the attachment of proline to tRNA(Pro) in a two-step reaction: proline is first activated by ATP to form Pro-AMP and then transferred to the acceptor end of tRNA(Pro).</text>
</comment>
<comment type="catalytic activity">
    <reaction evidence="1">
        <text>tRNA(Pro) + L-proline + ATP = L-prolyl-tRNA(Pro) + AMP + diphosphate</text>
        <dbReference type="Rhea" id="RHEA:14305"/>
        <dbReference type="Rhea" id="RHEA-COMP:9700"/>
        <dbReference type="Rhea" id="RHEA-COMP:9702"/>
        <dbReference type="ChEBI" id="CHEBI:30616"/>
        <dbReference type="ChEBI" id="CHEBI:33019"/>
        <dbReference type="ChEBI" id="CHEBI:60039"/>
        <dbReference type="ChEBI" id="CHEBI:78442"/>
        <dbReference type="ChEBI" id="CHEBI:78532"/>
        <dbReference type="ChEBI" id="CHEBI:456215"/>
        <dbReference type="EC" id="6.1.1.15"/>
    </reaction>
</comment>
<comment type="subunit">
    <text evidence="1">Homodimer.</text>
</comment>
<comment type="subcellular location">
    <subcellularLocation>
        <location evidence="1">Cytoplasm</location>
    </subcellularLocation>
</comment>
<comment type="similarity">
    <text evidence="1">Belongs to the class-II aminoacyl-tRNA synthetase family. ProS type 2 subfamily.</text>
</comment>
<gene>
    <name evidence="1" type="primary">proS</name>
    <name type="ordered locus">BH08790</name>
</gene>
<name>SYP_BARHE</name>
<sequence length="441" mass="50439">MRLSQYFLPLLKENPKEAEIISHRLMLRAGMIRQQTSGIYSWLPLGKKVLDKICKIIREEQERAGAIEILMPTIQSADLWRESDRYDDYGLEMLRIKDRQKRDLLYGPTNEEMVTDIFRSYIRSYKDLPLNLYHIQWKFRDEIRPRFGVMRSREFLMKDAYSFDLDYEGSKISYNRMFVAYLRTFSCLGLKAIPMRADTGPIGGKLSHEFIILAETGESAIFCDKHFLELTVPDSSIDFSDKAILANIVKQWTSFYAATEEMHDEEEWAKISDNNRLSARGIEVGHIFHFGTKYSAPMGAKVMGQDGKEHLVSMGSYGIGPSRLVAAVIEASHDENGIIWPKSIAPFDFGIINMKPDDEKCTHACETLYKGLRYAGFDPLLDDRNERPGSKFATMDLIGLPTQIIVGPKSVAQNEVEIKDRKTGIKKSLTVENVLNQFSVI</sequence>
<organism>
    <name type="scientific">Bartonella henselae (strain ATCC 49882 / DSM 28221 / CCUG 30454 / Houston 1)</name>
    <name type="common">Rochalimaea henselae</name>
    <dbReference type="NCBI Taxonomy" id="283166"/>
    <lineage>
        <taxon>Bacteria</taxon>
        <taxon>Pseudomonadati</taxon>
        <taxon>Pseudomonadota</taxon>
        <taxon>Alphaproteobacteria</taxon>
        <taxon>Hyphomicrobiales</taxon>
        <taxon>Bartonellaceae</taxon>
        <taxon>Bartonella</taxon>
    </lineage>
</organism>
<accession>Q6G3A4</accession>
<evidence type="ECO:0000255" key="1">
    <source>
        <dbReference type="HAMAP-Rule" id="MF_01570"/>
    </source>
</evidence>
<feature type="chain" id="PRO_0000248889" description="Proline--tRNA ligase">
    <location>
        <begin position="1"/>
        <end position="441"/>
    </location>
</feature>
<reference key="1">
    <citation type="journal article" date="2004" name="Proc. Natl. Acad. Sci. U.S.A.">
        <title>The louse-borne human pathogen Bartonella quintana is a genomic derivative of the zoonotic agent Bartonella henselae.</title>
        <authorList>
            <person name="Alsmark U.C.M."/>
            <person name="Frank A.C."/>
            <person name="Karlberg E.O."/>
            <person name="Legault B.-A."/>
            <person name="Ardell D.H."/>
            <person name="Canbaeck B."/>
            <person name="Eriksson A.-S."/>
            <person name="Naeslund A.K."/>
            <person name="Handley S.A."/>
            <person name="Huvet M."/>
            <person name="La Scola B."/>
            <person name="Holmberg M."/>
            <person name="Andersson S.G.E."/>
        </authorList>
    </citation>
    <scope>NUCLEOTIDE SEQUENCE [LARGE SCALE GENOMIC DNA]</scope>
    <source>
        <strain>ATCC 49882 / DSM 28221 / CCUG 30454 / Houston 1</strain>
    </source>
</reference>
<proteinExistence type="inferred from homology"/>
<protein>
    <recommendedName>
        <fullName evidence="1">Proline--tRNA ligase</fullName>
        <ecNumber evidence="1">6.1.1.15</ecNumber>
    </recommendedName>
    <alternativeName>
        <fullName evidence="1">Prolyl-tRNA synthetase</fullName>
        <shortName evidence="1">ProRS</shortName>
    </alternativeName>
</protein>